<organism>
    <name type="scientific">Pseudomonas syringae pv. syringae (strain B728a)</name>
    <dbReference type="NCBI Taxonomy" id="205918"/>
    <lineage>
        <taxon>Bacteria</taxon>
        <taxon>Pseudomonadati</taxon>
        <taxon>Pseudomonadota</taxon>
        <taxon>Gammaproteobacteria</taxon>
        <taxon>Pseudomonadales</taxon>
        <taxon>Pseudomonadaceae</taxon>
        <taxon>Pseudomonas</taxon>
        <taxon>Pseudomonas syringae</taxon>
    </lineage>
</organism>
<comment type="function">
    <text evidence="1">This protein binds to 23S rRNA in the presence of protein L20.</text>
</comment>
<comment type="subunit">
    <text evidence="1">Part of the 50S ribosomal subunit. Contacts protein L20.</text>
</comment>
<comment type="similarity">
    <text evidence="1">Belongs to the bacterial ribosomal protein bL21 family.</text>
</comment>
<reference key="1">
    <citation type="journal article" date="2005" name="Proc. Natl. Acad. Sci. U.S.A.">
        <title>Comparison of the complete genome sequences of Pseudomonas syringae pv. syringae B728a and pv. tomato DC3000.</title>
        <authorList>
            <person name="Feil H."/>
            <person name="Feil W.S."/>
            <person name="Chain P."/>
            <person name="Larimer F."/>
            <person name="Dibartolo G."/>
            <person name="Copeland A."/>
            <person name="Lykidis A."/>
            <person name="Trong S."/>
            <person name="Nolan M."/>
            <person name="Goltsman E."/>
            <person name="Thiel J."/>
            <person name="Malfatti S."/>
            <person name="Loper J.E."/>
            <person name="Lapidus A."/>
            <person name="Detter J.C."/>
            <person name="Land M."/>
            <person name="Richardson P.M."/>
            <person name="Kyrpides N.C."/>
            <person name="Ivanova N."/>
            <person name="Lindow S.E."/>
        </authorList>
    </citation>
    <scope>NUCLEOTIDE SEQUENCE [LARGE SCALE GENOMIC DNA]</scope>
    <source>
        <strain>B728a</strain>
    </source>
</reference>
<accession>Q4ZYK3</accession>
<dbReference type="EMBL" id="CP000075">
    <property type="protein sequence ID" value="AAY35769.1"/>
    <property type="molecule type" value="Genomic_DNA"/>
</dbReference>
<dbReference type="RefSeq" id="WP_002551971.1">
    <property type="nucleotide sequence ID" value="NC_007005.1"/>
</dbReference>
<dbReference type="RefSeq" id="YP_233807.1">
    <property type="nucleotide sequence ID" value="NC_007005.1"/>
</dbReference>
<dbReference type="SMR" id="Q4ZYK3"/>
<dbReference type="STRING" id="205918.Psyr_0701"/>
<dbReference type="GeneID" id="96217043"/>
<dbReference type="KEGG" id="psb:Psyr_0701"/>
<dbReference type="PATRIC" id="fig|205918.7.peg.726"/>
<dbReference type="eggNOG" id="COG0261">
    <property type="taxonomic scope" value="Bacteria"/>
</dbReference>
<dbReference type="HOGENOM" id="CLU_061463_3_2_6"/>
<dbReference type="OrthoDB" id="9813334at2"/>
<dbReference type="Proteomes" id="UP000000426">
    <property type="component" value="Chromosome"/>
</dbReference>
<dbReference type="GO" id="GO:0005737">
    <property type="term" value="C:cytoplasm"/>
    <property type="evidence" value="ECO:0007669"/>
    <property type="project" value="UniProtKB-ARBA"/>
</dbReference>
<dbReference type="GO" id="GO:1990904">
    <property type="term" value="C:ribonucleoprotein complex"/>
    <property type="evidence" value="ECO:0007669"/>
    <property type="project" value="UniProtKB-KW"/>
</dbReference>
<dbReference type="GO" id="GO:0005840">
    <property type="term" value="C:ribosome"/>
    <property type="evidence" value="ECO:0007669"/>
    <property type="project" value="UniProtKB-KW"/>
</dbReference>
<dbReference type="GO" id="GO:0019843">
    <property type="term" value="F:rRNA binding"/>
    <property type="evidence" value="ECO:0007669"/>
    <property type="project" value="UniProtKB-UniRule"/>
</dbReference>
<dbReference type="GO" id="GO:0003735">
    <property type="term" value="F:structural constituent of ribosome"/>
    <property type="evidence" value="ECO:0007669"/>
    <property type="project" value="InterPro"/>
</dbReference>
<dbReference type="GO" id="GO:0006412">
    <property type="term" value="P:translation"/>
    <property type="evidence" value="ECO:0007669"/>
    <property type="project" value="UniProtKB-UniRule"/>
</dbReference>
<dbReference type="HAMAP" id="MF_01363">
    <property type="entry name" value="Ribosomal_bL21"/>
    <property type="match status" value="1"/>
</dbReference>
<dbReference type="InterPro" id="IPR028909">
    <property type="entry name" value="bL21-like"/>
</dbReference>
<dbReference type="InterPro" id="IPR036164">
    <property type="entry name" value="bL21-like_sf"/>
</dbReference>
<dbReference type="InterPro" id="IPR001787">
    <property type="entry name" value="Ribosomal_bL21"/>
</dbReference>
<dbReference type="InterPro" id="IPR018258">
    <property type="entry name" value="Ribosomal_bL21_CS"/>
</dbReference>
<dbReference type="NCBIfam" id="TIGR00061">
    <property type="entry name" value="L21"/>
    <property type="match status" value="1"/>
</dbReference>
<dbReference type="PANTHER" id="PTHR21349">
    <property type="entry name" value="50S RIBOSOMAL PROTEIN L21"/>
    <property type="match status" value="1"/>
</dbReference>
<dbReference type="PANTHER" id="PTHR21349:SF0">
    <property type="entry name" value="LARGE RIBOSOMAL SUBUNIT PROTEIN BL21M"/>
    <property type="match status" value="1"/>
</dbReference>
<dbReference type="Pfam" id="PF00829">
    <property type="entry name" value="Ribosomal_L21p"/>
    <property type="match status" value="1"/>
</dbReference>
<dbReference type="SUPFAM" id="SSF141091">
    <property type="entry name" value="L21p-like"/>
    <property type="match status" value="1"/>
</dbReference>
<dbReference type="PROSITE" id="PS01169">
    <property type="entry name" value="RIBOSOMAL_L21"/>
    <property type="match status" value="1"/>
</dbReference>
<gene>
    <name evidence="1" type="primary">rplU</name>
    <name type="ordered locus">Psyr_0701</name>
</gene>
<proteinExistence type="inferred from homology"/>
<evidence type="ECO:0000255" key="1">
    <source>
        <dbReference type="HAMAP-Rule" id="MF_01363"/>
    </source>
</evidence>
<evidence type="ECO:0000305" key="2"/>
<feature type="chain" id="PRO_0000270713" description="Large ribosomal subunit protein bL21">
    <location>
        <begin position="1"/>
        <end position="103"/>
    </location>
</feature>
<keyword id="KW-0687">Ribonucleoprotein</keyword>
<keyword id="KW-0689">Ribosomal protein</keyword>
<keyword id="KW-0694">RNA-binding</keyword>
<keyword id="KW-0699">rRNA-binding</keyword>
<name>RL21_PSEU2</name>
<sequence length="103" mass="11502">MYAVIVTGGKQYKVAPGEYLKIEKLEIATGESVTFDRVLLVGNGDDVNIGAPVVAGATVVAEVVSQGRHDKVRIIKFRRRKHHMKRMGHRQWYTEIKITGIQA</sequence>
<protein>
    <recommendedName>
        <fullName evidence="1">Large ribosomal subunit protein bL21</fullName>
    </recommendedName>
    <alternativeName>
        <fullName evidence="2">50S ribosomal protein L21</fullName>
    </alternativeName>
</protein>